<accession>Q83CQ2</accession>
<name>MUTS_COXBU</name>
<dbReference type="EMBL" id="AE016828">
    <property type="protein sequence ID" value="AAO90571.2"/>
    <property type="status" value="ALT_INIT"/>
    <property type="molecule type" value="Genomic_DNA"/>
</dbReference>
<dbReference type="RefSeq" id="NP_820057.2">
    <property type="nucleotide sequence ID" value="NC_002971.3"/>
</dbReference>
<dbReference type="RefSeq" id="WP_010957974.1">
    <property type="nucleotide sequence ID" value="NC_002971.4"/>
</dbReference>
<dbReference type="SMR" id="Q83CQ2"/>
<dbReference type="STRING" id="227377.CBU_1056"/>
<dbReference type="EnsemblBacteria" id="AAO90571">
    <property type="protein sequence ID" value="AAO90571"/>
    <property type="gene ID" value="CBU_1056"/>
</dbReference>
<dbReference type="GeneID" id="1208957"/>
<dbReference type="KEGG" id="cbu:CBU_1056"/>
<dbReference type="PATRIC" id="fig|227377.7.peg.1047"/>
<dbReference type="eggNOG" id="COG0249">
    <property type="taxonomic scope" value="Bacteria"/>
</dbReference>
<dbReference type="HOGENOM" id="CLU_002472_4_0_6"/>
<dbReference type="OrthoDB" id="9802448at2"/>
<dbReference type="Proteomes" id="UP000002671">
    <property type="component" value="Chromosome"/>
</dbReference>
<dbReference type="GO" id="GO:0005829">
    <property type="term" value="C:cytosol"/>
    <property type="evidence" value="ECO:0000318"/>
    <property type="project" value="GO_Central"/>
</dbReference>
<dbReference type="GO" id="GO:0005524">
    <property type="term" value="F:ATP binding"/>
    <property type="evidence" value="ECO:0007669"/>
    <property type="project" value="UniProtKB-UniRule"/>
</dbReference>
<dbReference type="GO" id="GO:0140664">
    <property type="term" value="F:ATP-dependent DNA damage sensor activity"/>
    <property type="evidence" value="ECO:0007669"/>
    <property type="project" value="InterPro"/>
</dbReference>
<dbReference type="GO" id="GO:0003684">
    <property type="term" value="F:damaged DNA binding"/>
    <property type="evidence" value="ECO:0007669"/>
    <property type="project" value="UniProtKB-UniRule"/>
</dbReference>
<dbReference type="GO" id="GO:0030983">
    <property type="term" value="F:mismatched DNA binding"/>
    <property type="evidence" value="ECO:0000318"/>
    <property type="project" value="GO_Central"/>
</dbReference>
<dbReference type="GO" id="GO:0006298">
    <property type="term" value="P:mismatch repair"/>
    <property type="evidence" value="ECO:0000318"/>
    <property type="project" value="GO_Central"/>
</dbReference>
<dbReference type="CDD" id="cd03284">
    <property type="entry name" value="ABC_MutS1"/>
    <property type="match status" value="1"/>
</dbReference>
<dbReference type="FunFam" id="1.10.1420.10:FF:000002">
    <property type="entry name" value="DNA mismatch repair protein MutS"/>
    <property type="match status" value="1"/>
</dbReference>
<dbReference type="FunFam" id="3.40.1170.10:FF:000001">
    <property type="entry name" value="DNA mismatch repair protein MutS"/>
    <property type="match status" value="1"/>
</dbReference>
<dbReference type="FunFam" id="3.40.50.300:FF:000283">
    <property type="entry name" value="DNA mismatch repair protein MutS"/>
    <property type="match status" value="1"/>
</dbReference>
<dbReference type="Gene3D" id="1.10.1420.10">
    <property type="match status" value="2"/>
</dbReference>
<dbReference type="Gene3D" id="6.10.140.430">
    <property type="match status" value="1"/>
</dbReference>
<dbReference type="Gene3D" id="3.40.1170.10">
    <property type="entry name" value="DNA repair protein MutS, domain I"/>
    <property type="match status" value="1"/>
</dbReference>
<dbReference type="Gene3D" id="3.30.420.110">
    <property type="entry name" value="MutS, connector domain"/>
    <property type="match status" value="1"/>
</dbReference>
<dbReference type="Gene3D" id="3.40.50.300">
    <property type="entry name" value="P-loop containing nucleotide triphosphate hydrolases"/>
    <property type="match status" value="1"/>
</dbReference>
<dbReference type="HAMAP" id="MF_00096">
    <property type="entry name" value="MutS"/>
    <property type="match status" value="1"/>
</dbReference>
<dbReference type="InterPro" id="IPR005748">
    <property type="entry name" value="DNA_mismatch_repair_MutS"/>
</dbReference>
<dbReference type="InterPro" id="IPR007695">
    <property type="entry name" value="DNA_mismatch_repair_MutS-lik_N"/>
</dbReference>
<dbReference type="InterPro" id="IPR017261">
    <property type="entry name" value="DNA_mismatch_repair_MutS/MSH"/>
</dbReference>
<dbReference type="InterPro" id="IPR000432">
    <property type="entry name" value="DNA_mismatch_repair_MutS_C"/>
</dbReference>
<dbReference type="InterPro" id="IPR007861">
    <property type="entry name" value="DNA_mismatch_repair_MutS_clamp"/>
</dbReference>
<dbReference type="InterPro" id="IPR007696">
    <property type="entry name" value="DNA_mismatch_repair_MutS_core"/>
</dbReference>
<dbReference type="InterPro" id="IPR016151">
    <property type="entry name" value="DNA_mismatch_repair_MutS_N"/>
</dbReference>
<dbReference type="InterPro" id="IPR036187">
    <property type="entry name" value="DNA_mismatch_repair_MutS_sf"/>
</dbReference>
<dbReference type="InterPro" id="IPR007860">
    <property type="entry name" value="DNA_mmatch_repair_MutS_con_dom"/>
</dbReference>
<dbReference type="InterPro" id="IPR045076">
    <property type="entry name" value="MutS"/>
</dbReference>
<dbReference type="InterPro" id="IPR036678">
    <property type="entry name" value="MutS_con_dom_sf"/>
</dbReference>
<dbReference type="InterPro" id="IPR027417">
    <property type="entry name" value="P-loop_NTPase"/>
</dbReference>
<dbReference type="NCBIfam" id="TIGR01070">
    <property type="entry name" value="mutS1"/>
    <property type="match status" value="1"/>
</dbReference>
<dbReference type="NCBIfam" id="NF003810">
    <property type="entry name" value="PRK05399.1"/>
    <property type="match status" value="1"/>
</dbReference>
<dbReference type="PANTHER" id="PTHR11361:SF34">
    <property type="entry name" value="DNA MISMATCH REPAIR PROTEIN MSH1, MITOCHONDRIAL"/>
    <property type="match status" value="1"/>
</dbReference>
<dbReference type="PANTHER" id="PTHR11361">
    <property type="entry name" value="DNA MISMATCH REPAIR PROTEIN MUTS FAMILY MEMBER"/>
    <property type="match status" value="1"/>
</dbReference>
<dbReference type="Pfam" id="PF01624">
    <property type="entry name" value="MutS_I"/>
    <property type="match status" value="1"/>
</dbReference>
<dbReference type="Pfam" id="PF05188">
    <property type="entry name" value="MutS_II"/>
    <property type="match status" value="1"/>
</dbReference>
<dbReference type="Pfam" id="PF05192">
    <property type="entry name" value="MutS_III"/>
    <property type="match status" value="1"/>
</dbReference>
<dbReference type="Pfam" id="PF05190">
    <property type="entry name" value="MutS_IV"/>
    <property type="match status" value="1"/>
</dbReference>
<dbReference type="Pfam" id="PF00488">
    <property type="entry name" value="MutS_V"/>
    <property type="match status" value="1"/>
</dbReference>
<dbReference type="PIRSF" id="PIRSF037677">
    <property type="entry name" value="DNA_mis_repair_Msh6"/>
    <property type="match status" value="1"/>
</dbReference>
<dbReference type="SMART" id="SM00534">
    <property type="entry name" value="MUTSac"/>
    <property type="match status" value="1"/>
</dbReference>
<dbReference type="SMART" id="SM00533">
    <property type="entry name" value="MUTSd"/>
    <property type="match status" value="1"/>
</dbReference>
<dbReference type="SUPFAM" id="SSF55271">
    <property type="entry name" value="DNA repair protein MutS, domain I"/>
    <property type="match status" value="1"/>
</dbReference>
<dbReference type="SUPFAM" id="SSF53150">
    <property type="entry name" value="DNA repair protein MutS, domain II"/>
    <property type="match status" value="1"/>
</dbReference>
<dbReference type="SUPFAM" id="SSF48334">
    <property type="entry name" value="DNA repair protein MutS, domain III"/>
    <property type="match status" value="1"/>
</dbReference>
<dbReference type="SUPFAM" id="SSF52540">
    <property type="entry name" value="P-loop containing nucleoside triphosphate hydrolases"/>
    <property type="match status" value="1"/>
</dbReference>
<dbReference type="PROSITE" id="PS00486">
    <property type="entry name" value="DNA_MISMATCH_REPAIR_2"/>
    <property type="match status" value="1"/>
</dbReference>
<sequence length="859" mass="97336">MELQTKSPTTQNDFSQHTPMMRQYLRIKAEYPDLLVFYRMGDFYELFYDDAKKAAKLLNITLTARGQSAGHAIPMAGVPYHAVENYLTKLVRLGESVVICEQIGDPATSKGPVAREVTRIITPGTVSDEALLDEHRDNTLMVIHQEKDRFGIATLDITSGRFLIQEIISENALFAEIERIRPAELLISEENSVHPLKADSIKRRPPWEFDHATALTLLCQQFQTKSLDGFGITHLPLAITAAGCLLQYVNYTQKSALPHIHSIQAEQNEEALFIDANTRRNLELITNLQGEEVHSLAWLLDHTATPMGSRLLRRWINRPLRDQILLQQRQNAVSTLLEKRNYSEIYENLRHIGDLERIVARIALRSARPRDLMQLRQALGVLPTLHQQLTNLPLNKQLQEIKNNLGLFDELFRLLKKAIIENPPIVIRDGGVIADGYDAPLDELRNMSTNSHQFLIDLEQQERERTKINTVKVGYNRIHGYYIEISRAQAKQAPTEYIRRQTLKNVERYITPELKIFEDKVLSSRSRALAREKELYEQLLDTLIEKLIPLQQCASAIANLDVLNTLAERADTLNFNAPQFCDYPIIKIEAGRHPIVENVMTDPFMPNDTHLDEKRRMLIITGPNMGGKSTYMRQTALITLLAYIGSFVPAKNAQLGPIDRIFTRIGAADDLASGRSTFMVEMTETAAILHNATEESLVLMDEVGRGTSTFDGLSLAYACASYLATKLKAFALFATHYFELTALASTLQAVKNVHLDAVEHEEKIIFLHALREGPANKSYGLQVAQLAGIPRSVIQHARQKLEELENPVISETQQPQQNELFLPIENPVLTQLDKLNPDNLTPKQALDILYQLIQLRQQK</sequence>
<feature type="chain" id="PRO_0000115092" description="DNA mismatch repair protein MutS">
    <location>
        <begin position="1"/>
        <end position="859"/>
    </location>
</feature>
<feature type="binding site" evidence="1">
    <location>
        <begin position="622"/>
        <end position="629"/>
    </location>
    <ligand>
        <name>ATP</name>
        <dbReference type="ChEBI" id="CHEBI:30616"/>
    </ligand>
</feature>
<protein>
    <recommendedName>
        <fullName evidence="1">DNA mismatch repair protein MutS</fullName>
    </recommendedName>
</protein>
<proteinExistence type="inferred from homology"/>
<gene>
    <name evidence="1" type="primary">mutS</name>
    <name type="ordered locus">CBU_1056</name>
</gene>
<organism>
    <name type="scientific">Coxiella burnetii (strain RSA 493 / Nine Mile phase I)</name>
    <dbReference type="NCBI Taxonomy" id="227377"/>
    <lineage>
        <taxon>Bacteria</taxon>
        <taxon>Pseudomonadati</taxon>
        <taxon>Pseudomonadota</taxon>
        <taxon>Gammaproteobacteria</taxon>
        <taxon>Legionellales</taxon>
        <taxon>Coxiellaceae</taxon>
        <taxon>Coxiella</taxon>
    </lineage>
</organism>
<comment type="function">
    <text evidence="1">This protein is involved in the repair of mismatches in DNA. It is possible that it carries out the mismatch recognition step. This protein has a weak ATPase activity.</text>
</comment>
<comment type="similarity">
    <text evidence="1">Belongs to the DNA mismatch repair MutS family.</text>
</comment>
<comment type="sequence caution" evidence="2">
    <conflict type="erroneous initiation">
        <sequence resource="EMBL-CDS" id="AAO90571"/>
    </conflict>
</comment>
<reference key="1">
    <citation type="journal article" date="2003" name="Proc. Natl. Acad. Sci. U.S.A.">
        <title>Complete genome sequence of the Q-fever pathogen, Coxiella burnetii.</title>
        <authorList>
            <person name="Seshadri R."/>
            <person name="Paulsen I.T."/>
            <person name="Eisen J.A."/>
            <person name="Read T.D."/>
            <person name="Nelson K.E."/>
            <person name="Nelson W.C."/>
            <person name="Ward N.L."/>
            <person name="Tettelin H."/>
            <person name="Davidsen T.M."/>
            <person name="Beanan M.J."/>
            <person name="DeBoy R.T."/>
            <person name="Daugherty S.C."/>
            <person name="Brinkac L.M."/>
            <person name="Madupu R."/>
            <person name="Dodson R.J."/>
            <person name="Khouri H.M."/>
            <person name="Lee K.H."/>
            <person name="Carty H.A."/>
            <person name="Scanlan D."/>
            <person name="Heinzen R.A."/>
            <person name="Thompson H.A."/>
            <person name="Samuel J.E."/>
            <person name="Fraser C.M."/>
            <person name="Heidelberg J.F."/>
        </authorList>
    </citation>
    <scope>NUCLEOTIDE SEQUENCE [LARGE SCALE GENOMIC DNA]</scope>
    <source>
        <strain>RSA 493 / Nine Mile phase I</strain>
    </source>
</reference>
<evidence type="ECO:0000255" key="1">
    <source>
        <dbReference type="HAMAP-Rule" id="MF_00096"/>
    </source>
</evidence>
<evidence type="ECO:0000305" key="2"/>
<keyword id="KW-0067">ATP-binding</keyword>
<keyword id="KW-0227">DNA damage</keyword>
<keyword id="KW-0234">DNA repair</keyword>
<keyword id="KW-0238">DNA-binding</keyword>
<keyword id="KW-0547">Nucleotide-binding</keyword>
<keyword id="KW-1185">Reference proteome</keyword>